<organism>
    <name type="scientific">Cereibacter sphaeroides</name>
    <name type="common">Rhodobacter sphaeroides</name>
    <dbReference type="NCBI Taxonomy" id="1063"/>
    <lineage>
        <taxon>Bacteria</taxon>
        <taxon>Pseudomonadati</taxon>
        <taxon>Pseudomonadota</taxon>
        <taxon>Alphaproteobacteria</taxon>
        <taxon>Rhodobacterales</taxon>
        <taxon>Paracoccaceae</taxon>
        <taxon>Cereibacter</taxon>
    </lineage>
</organism>
<reference key="1">
    <citation type="journal article" date="1997" name="J. Bacteriol.">
        <title>Analysis of the cbbXYZ operon in Rhodobacter sphaeroides.</title>
        <authorList>
            <person name="Gibson J.L."/>
            <person name="Tabita F.R."/>
        </authorList>
    </citation>
    <scope>NUCLEOTIDE SEQUENCE [GENOMIC DNA]</scope>
    <source>
        <strain>HR</strain>
    </source>
</reference>
<dbReference type="EC" id="3.1.3.18" evidence="1"/>
<dbReference type="EMBL" id="U67781">
    <property type="protein sequence ID" value="AAC44829.1"/>
    <property type="molecule type" value="Genomic_DNA"/>
</dbReference>
<dbReference type="SMR" id="P95650"/>
<dbReference type="UniPathway" id="UPA00865">
    <property type="reaction ID" value="UER00834"/>
</dbReference>
<dbReference type="GO" id="GO:0005829">
    <property type="term" value="C:cytosol"/>
    <property type="evidence" value="ECO:0007669"/>
    <property type="project" value="TreeGrafter"/>
</dbReference>
<dbReference type="GO" id="GO:0046872">
    <property type="term" value="F:metal ion binding"/>
    <property type="evidence" value="ECO:0007669"/>
    <property type="project" value="UniProtKB-KW"/>
</dbReference>
<dbReference type="GO" id="GO:0008967">
    <property type="term" value="F:phosphoglycolate phosphatase activity"/>
    <property type="evidence" value="ECO:0007669"/>
    <property type="project" value="UniProtKB-UniRule"/>
</dbReference>
<dbReference type="GO" id="GO:0005975">
    <property type="term" value="P:carbohydrate metabolic process"/>
    <property type="evidence" value="ECO:0007669"/>
    <property type="project" value="InterPro"/>
</dbReference>
<dbReference type="GO" id="GO:0006281">
    <property type="term" value="P:DNA repair"/>
    <property type="evidence" value="ECO:0007669"/>
    <property type="project" value="TreeGrafter"/>
</dbReference>
<dbReference type="GO" id="GO:0046295">
    <property type="term" value="P:glycolate biosynthetic process"/>
    <property type="evidence" value="ECO:0007669"/>
    <property type="project" value="UniProtKB-UniRule"/>
</dbReference>
<dbReference type="CDD" id="cd07512">
    <property type="entry name" value="HAD_PGPase"/>
    <property type="match status" value="1"/>
</dbReference>
<dbReference type="Gene3D" id="3.40.50.1000">
    <property type="entry name" value="HAD superfamily/HAD-like"/>
    <property type="match status" value="1"/>
</dbReference>
<dbReference type="Gene3D" id="1.10.150.240">
    <property type="entry name" value="Putative phosphatase, domain 2"/>
    <property type="match status" value="1"/>
</dbReference>
<dbReference type="HAMAP" id="MF_00495">
    <property type="entry name" value="GPH_hydrolase_bact"/>
    <property type="match status" value="1"/>
</dbReference>
<dbReference type="InterPro" id="IPR050155">
    <property type="entry name" value="HAD-like_hydrolase_sf"/>
</dbReference>
<dbReference type="InterPro" id="IPR036412">
    <property type="entry name" value="HAD-like_sf"/>
</dbReference>
<dbReference type="InterPro" id="IPR006439">
    <property type="entry name" value="HAD-SF_hydro_IA"/>
</dbReference>
<dbReference type="InterPro" id="IPR023214">
    <property type="entry name" value="HAD_sf"/>
</dbReference>
<dbReference type="InterPro" id="IPR023198">
    <property type="entry name" value="PGP-like_dom2"/>
</dbReference>
<dbReference type="InterPro" id="IPR037512">
    <property type="entry name" value="PGPase_prok"/>
</dbReference>
<dbReference type="NCBIfam" id="TIGR01549">
    <property type="entry name" value="HAD-SF-IA-v1"/>
    <property type="match status" value="1"/>
</dbReference>
<dbReference type="NCBIfam" id="TIGR01449">
    <property type="entry name" value="PGP_bact"/>
    <property type="match status" value="1"/>
</dbReference>
<dbReference type="PANTHER" id="PTHR43434">
    <property type="entry name" value="PHOSPHOGLYCOLATE PHOSPHATASE"/>
    <property type="match status" value="1"/>
</dbReference>
<dbReference type="PANTHER" id="PTHR43434:SF1">
    <property type="entry name" value="PHOSPHOGLYCOLATE PHOSPHATASE"/>
    <property type="match status" value="1"/>
</dbReference>
<dbReference type="Pfam" id="PF00702">
    <property type="entry name" value="Hydrolase"/>
    <property type="match status" value="1"/>
</dbReference>
<dbReference type="PRINTS" id="PR00413">
    <property type="entry name" value="HADHALOGNASE"/>
</dbReference>
<dbReference type="SFLD" id="SFLDG01135">
    <property type="entry name" value="C1.5.6:_HAD__Beta-PGM__Phospha"/>
    <property type="match status" value="1"/>
</dbReference>
<dbReference type="SFLD" id="SFLDG01129">
    <property type="entry name" value="C1.5:_HAD__Beta-PGM__Phosphata"/>
    <property type="match status" value="1"/>
</dbReference>
<dbReference type="SUPFAM" id="SSF56784">
    <property type="entry name" value="HAD-like"/>
    <property type="match status" value="1"/>
</dbReference>
<keyword id="KW-0119">Carbohydrate metabolism</keyword>
<keyword id="KW-0378">Hydrolase</keyword>
<keyword id="KW-0460">Magnesium</keyword>
<keyword id="KW-0479">Metal-binding</keyword>
<feature type="chain" id="PRO_0000108039" description="Phosphoglycolate phosphatase">
    <location>
        <begin position="1"/>
        <end position="218"/>
    </location>
</feature>
<feature type="active site" description="Nucleophile" evidence="1">
    <location>
        <position position="7"/>
    </location>
</feature>
<feature type="binding site" evidence="1">
    <location>
        <position position="7"/>
    </location>
    <ligand>
        <name>Mg(2+)</name>
        <dbReference type="ChEBI" id="CHEBI:18420"/>
    </ligand>
</feature>
<feature type="binding site" evidence="1">
    <location>
        <position position="9"/>
    </location>
    <ligand>
        <name>Mg(2+)</name>
        <dbReference type="ChEBI" id="CHEBI:18420"/>
    </ligand>
</feature>
<feature type="binding site" evidence="1">
    <location>
        <position position="167"/>
    </location>
    <ligand>
        <name>Mg(2+)</name>
        <dbReference type="ChEBI" id="CHEBI:18420"/>
    </ligand>
</feature>
<accession>P95650</accession>
<sequence>MPGVVFDLDGTLVHSAPDIHAAVNKALAEEGGAPFTLAEITGFIGNGVPVLIQRVLAARGEAPDAHRQAELQGRFMAHYEADPATLTSVYPGAEAAIRHLRAEGWRIGLCTNKPVGASRQILSLFGLLELFDAIIGGESLPQRKPDPAPLRATAAALNEEVVLYVGDSEVDAATAEAAGLRFALFTEGYRHAPVHELPHHGLFSHHDELQDLLRRLLA</sequence>
<protein>
    <recommendedName>
        <fullName evidence="1">Phosphoglycolate phosphatase</fullName>
        <shortName evidence="1">PGP</shortName>
        <shortName evidence="1">PGPase</shortName>
        <ecNumber evidence="1">3.1.3.18</ecNumber>
    </recommendedName>
</protein>
<proteinExistence type="inferred from homology"/>
<comment type="function">
    <text evidence="1">Specifically catalyzes the dephosphorylation of 2-phosphoglycolate. Is involved in the dissimilation of the intracellular 2-phosphoglycolate formed during the DNA repair of 3'-phosphoglycolate ends, a major class of DNA lesions induced by oxidative stress.</text>
</comment>
<comment type="catalytic activity">
    <reaction evidence="1">
        <text>2-phosphoglycolate + H2O = glycolate + phosphate</text>
        <dbReference type="Rhea" id="RHEA:14369"/>
        <dbReference type="ChEBI" id="CHEBI:15377"/>
        <dbReference type="ChEBI" id="CHEBI:29805"/>
        <dbReference type="ChEBI" id="CHEBI:43474"/>
        <dbReference type="ChEBI" id="CHEBI:58033"/>
        <dbReference type="EC" id="3.1.3.18"/>
    </reaction>
</comment>
<comment type="cofactor">
    <cofactor evidence="1">
        <name>Mg(2+)</name>
        <dbReference type="ChEBI" id="CHEBI:18420"/>
    </cofactor>
</comment>
<comment type="pathway">
    <text evidence="1">Organic acid metabolism; glycolate biosynthesis; glycolate from 2-phosphoglycolate: step 1/1.</text>
</comment>
<comment type="similarity">
    <text evidence="1">Belongs to the HAD-like hydrolase superfamily. CbbY/CbbZ/Gph/YieH family.</text>
</comment>
<gene>
    <name evidence="1" type="primary">cbbZ</name>
</gene>
<name>GPH_CERSP</name>
<evidence type="ECO:0000255" key="1">
    <source>
        <dbReference type="HAMAP-Rule" id="MF_00495"/>
    </source>
</evidence>